<accession>P0AF70</accession>
<accession>P39278</accession>
<accession>Q2M6G0</accession>
<reference key="1">
    <citation type="journal article" date="1995" name="Nucleic Acids Res.">
        <title>Analysis of the Escherichia coli genome VI: DNA sequence of the region from 92.8 through 100 minutes.</title>
        <authorList>
            <person name="Burland V.D."/>
            <person name="Plunkett G. III"/>
            <person name="Sofia H.J."/>
            <person name="Daniels D.L."/>
            <person name="Blattner F.R."/>
        </authorList>
    </citation>
    <scope>NUCLEOTIDE SEQUENCE [LARGE SCALE GENOMIC DNA]</scope>
    <source>
        <strain>K12 / MG1655 / ATCC 47076</strain>
    </source>
</reference>
<reference key="2">
    <citation type="journal article" date="1997" name="Science">
        <title>The complete genome sequence of Escherichia coli K-12.</title>
        <authorList>
            <person name="Blattner F.R."/>
            <person name="Plunkett G. III"/>
            <person name="Bloch C.A."/>
            <person name="Perna N.T."/>
            <person name="Burland V."/>
            <person name="Riley M."/>
            <person name="Collado-Vides J."/>
            <person name="Glasner J.D."/>
            <person name="Rode C.K."/>
            <person name="Mayhew G.F."/>
            <person name="Gregor J."/>
            <person name="Davis N.W."/>
            <person name="Kirkpatrick H.A."/>
            <person name="Goeden M.A."/>
            <person name="Rose D.J."/>
            <person name="Mau B."/>
            <person name="Shao Y."/>
        </authorList>
    </citation>
    <scope>NUCLEOTIDE SEQUENCE [LARGE SCALE GENOMIC DNA]</scope>
    <source>
        <strain>K12 / MG1655 / ATCC 47076</strain>
    </source>
</reference>
<reference key="3">
    <citation type="journal article" date="2006" name="Mol. Syst. Biol.">
        <title>Highly accurate genome sequences of Escherichia coli K-12 strains MG1655 and W3110.</title>
        <authorList>
            <person name="Hayashi K."/>
            <person name="Morooka N."/>
            <person name="Yamamoto Y."/>
            <person name="Fujita K."/>
            <person name="Isono K."/>
            <person name="Choi S."/>
            <person name="Ohtsubo E."/>
            <person name="Baba T."/>
            <person name="Wanner B.L."/>
            <person name="Mori H."/>
            <person name="Horiuchi T."/>
        </authorList>
    </citation>
    <scope>NUCLEOTIDE SEQUENCE [LARGE SCALE GENOMIC DNA]</scope>
    <source>
        <strain>K12 / W3110 / ATCC 27325 / DSM 5911</strain>
    </source>
</reference>
<keyword id="KW-1185">Reference proteome</keyword>
<keyword id="KW-0732">Signal</keyword>
<proteinExistence type="inferred from homology"/>
<dbReference type="EMBL" id="U14003">
    <property type="protein sequence ID" value="AAA97043.1"/>
    <property type="status" value="ALT_INIT"/>
    <property type="molecule type" value="Genomic_DNA"/>
</dbReference>
<dbReference type="EMBL" id="U00096">
    <property type="protein sequence ID" value="AAC77104.2"/>
    <property type="molecule type" value="Genomic_DNA"/>
</dbReference>
<dbReference type="EMBL" id="AP009048">
    <property type="protein sequence ID" value="BAE78146.1"/>
    <property type="molecule type" value="Genomic_DNA"/>
</dbReference>
<dbReference type="RefSeq" id="NP_418568.2">
    <property type="nucleotide sequence ID" value="NC_000913.3"/>
</dbReference>
<dbReference type="RefSeq" id="WP_000558209.1">
    <property type="nucleotide sequence ID" value="NZ_STEB01000014.1"/>
</dbReference>
<dbReference type="SMR" id="P0AF70"/>
<dbReference type="BioGRID" id="4262687">
    <property type="interactions" value="557"/>
</dbReference>
<dbReference type="FunCoup" id="P0AF70">
    <property type="interactions" value="32"/>
</dbReference>
<dbReference type="STRING" id="511145.b4144"/>
<dbReference type="jPOST" id="P0AF70"/>
<dbReference type="PaxDb" id="511145-b4144"/>
<dbReference type="EnsemblBacteria" id="AAC77104">
    <property type="protein sequence ID" value="AAC77104"/>
    <property type="gene ID" value="b4144"/>
</dbReference>
<dbReference type="GeneID" id="948664"/>
<dbReference type="KEGG" id="ecj:JW5736"/>
<dbReference type="KEGG" id="eco:b4144"/>
<dbReference type="KEGG" id="ecoc:C3026_22395"/>
<dbReference type="PATRIC" id="fig|511145.12.peg.4276"/>
<dbReference type="EchoBASE" id="EB2364"/>
<dbReference type="eggNOG" id="ENOG50316V4">
    <property type="taxonomic scope" value="Bacteria"/>
</dbReference>
<dbReference type="HOGENOM" id="CLU_128258_2_0_6"/>
<dbReference type="InParanoid" id="P0AF70"/>
<dbReference type="OMA" id="QNFWSSF"/>
<dbReference type="OrthoDB" id="6415152at2"/>
<dbReference type="PhylomeDB" id="P0AF70"/>
<dbReference type="BioCyc" id="EcoCyc:G7834-MONOMER"/>
<dbReference type="PRO" id="PR:P0AF70"/>
<dbReference type="Proteomes" id="UP000000625">
    <property type="component" value="Chromosome"/>
</dbReference>
<dbReference type="GO" id="GO:0006974">
    <property type="term" value="P:DNA damage response"/>
    <property type="evidence" value="ECO:0000270"/>
    <property type="project" value="EcoliWiki"/>
</dbReference>
<dbReference type="InterPro" id="IPR025294">
    <property type="entry name" value="DUF4156"/>
</dbReference>
<dbReference type="Pfam" id="PF13698">
    <property type="entry name" value="DUF4156"/>
    <property type="match status" value="1"/>
</dbReference>
<dbReference type="PROSITE" id="PS51257">
    <property type="entry name" value="PROKAR_LIPOPROTEIN"/>
    <property type="match status" value="1"/>
</dbReference>
<protein>
    <recommendedName>
        <fullName>Uncharacterized protein YjeI</fullName>
    </recommendedName>
</protein>
<comment type="sequence caution" evidence="2">
    <conflict type="erroneous initiation">
        <sequence resource="EMBL-CDS" id="AAA97043"/>
    </conflict>
    <text>Extended N-terminus.</text>
</comment>
<gene>
    <name type="primary">yjeI</name>
    <name type="ordered locus">b4144</name>
    <name type="ordered locus">JW5736</name>
</gene>
<evidence type="ECO:0000255" key="1">
    <source>
        <dbReference type="PROSITE-ProRule" id="PRU00303"/>
    </source>
</evidence>
<evidence type="ECO:0000305" key="2"/>
<feature type="signal peptide" evidence="1">
    <location>
        <begin position="1"/>
        <end position="22"/>
    </location>
</feature>
<feature type="chain" id="PRO_0000013940" description="Uncharacterized protein YjeI">
    <location>
        <begin position="23"/>
        <end position="117"/>
    </location>
</feature>
<name>YJEI_ECOLI</name>
<sequence length="117" mass="11958">MHVKYLAGIVGAALLMAGCSSSNELSAAGQSVRIVDEQPGAECQLIGTATGKQSNWLSGQHGEEGGSMRGAANDLRNQAAAMGGNVIYGISSPSQGMLSSFVPTDSQIIGQVYKCPN</sequence>
<organism>
    <name type="scientific">Escherichia coli (strain K12)</name>
    <dbReference type="NCBI Taxonomy" id="83333"/>
    <lineage>
        <taxon>Bacteria</taxon>
        <taxon>Pseudomonadati</taxon>
        <taxon>Pseudomonadota</taxon>
        <taxon>Gammaproteobacteria</taxon>
        <taxon>Enterobacterales</taxon>
        <taxon>Enterobacteriaceae</taxon>
        <taxon>Escherichia</taxon>
    </lineage>
</organism>